<evidence type="ECO:0000255" key="1">
    <source>
        <dbReference type="HAMAP-Rule" id="MF_01368"/>
    </source>
</evidence>
<evidence type="ECO:0000305" key="2"/>
<protein>
    <recommendedName>
        <fullName evidence="1">Large ribosomal subunit protein bL17</fullName>
    </recommendedName>
    <alternativeName>
        <fullName evidence="2">50S ribosomal protein L17</fullName>
    </alternativeName>
</protein>
<reference key="1">
    <citation type="journal article" date="2007" name="J. Bacteriol.">
        <title>Genome of the opportunistic pathogen Streptococcus sanguinis.</title>
        <authorList>
            <person name="Xu P."/>
            <person name="Alves J.M."/>
            <person name="Kitten T."/>
            <person name="Brown A."/>
            <person name="Chen Z."/>
            <person name="Ozaki L.S."/>
            <person name="Manque P."/>
            <person name="Ge X."/>
            <person name="Serrano M.G."/>
            <person name="Puiu D."/>
            <person name="Hendricks S."/>
            <person name="Wang Y."/>
            <person name="Chaplin M.D."/>
            <person name="Akan D."/>
            <person name="Paik S."/>
            <person name="Peterson D.L."/>
            <person name="Macrina F.L."/>
            <person name="Buck G.A."/>
        </authorList>
    </citation>
    <scope>NUCLEOTIDE SEQUENCE [LARGE SCALE GENOMIC DNA]</scope>
    <source>
        <strain>SK36</strain>
    </source>
</reference>
<name>RL17_STRSV</name>
<organism>
    <name type="scientific">Streptococcus sanguinis (strain SK36)</name>
    <dbReference type="NCBI Taxonomy" id="388919"/>
    <lineage>
        <taxon>Bacteria</taxon>
        <taxon>Bacillati</taxon>
        <taxon>Bacillota</taxon>
        <taxon>Bacilli</taxon>
        <taxon>Lactobacillales</taxon>
        <taxon>Streptococcaceae</taxon>
        <taxon>Streptococcus</taxon>
    </lineage>
</organism>
<sequence length="128" mass="14534">MAYRKLGRTSSQRKAMLRDLTTDLLINESIVTTEARAKEIRKTVEKMITLGKRGDLHARRQAAAFVRNEIASENYDEATEKYTTTTALQKLFSEIAPRYAERNGGYTRILKTEPRRGDAAPMAIIELV</sequence>
<comment type="subunit">
    <text evidence="1">Part of the 50S ribosomal subunit. Contacts protein L32.</text>
</comment>
<comment type="similarity">
    <text evidence="1">Belongs to the bacterial ribosomal protein bL17 family.</text>
</comment>
<feature type="chain" id="PRO_1000055970" description="Large ribosomal subunit protein bL17">
    <location>
        <begin position="1"/>
        <end position="128"/>
    </location>
</feature>
<proteinExistence type="inferred from homology"/>
<accession>A3CK91</accession>
<gene>
    <name evidence="1" type="primary">rplQ</name>
    <name type="ordered locus">SSA_0133</name>
</gene>
<keyword id="KW-1185">Reference proteome</keyword>
<keyword id="KW-0687">Ribonucleoprotein</keyword>
<keyword id="KW-0689">Ribosomal protein</keyword>
<dbReference type="EMBL" id="CP000387">
    <property type="protein sequence ID" value="ABN43596.1"/>
    <property type="molecule type" value="Genomic_DNA"/>
</dbReference>
<dbReference type="RefSeq" id="WP_002894521.1">
    <property type="nucleotide sequence ID" value="NZ_CAXTYR010000005.1"/>
</dbReference>
<dbReference type="RefSeq" id="YP_001034146.1">
    <property type="nucleotide sequence ID" value="NC_009009.1"/>
</dbReference>
<dbReference type="SMR" id="A3CK91"/>
<dbReference type="STRING" id="388919.SSA_0133"/>
<dbReference type="GeneID" id="48426558"/>
<dbReference type="KEGG" id="ssa:SSA_0133"/>
<dbReference type="PATRIC" id="fig|388919.9.peg.128"/>
<dbReference type="eggNOG" id="COG0203">
    <property type="taxonomic scope" value="Bacteria"/>
</dbReference>
<dbReference type="HOGENOM" id="CLU_074407_2_2_9"/>
<dbReference type="OrthoDB" id="9809073at2"/>
<dbReference type="Proteomes" id="UP000002148">
    <property type="component" value="Chromosome"/>
</dbReference>
<dbReference type="GO" id="GO:0022625">
    <property type="term" value="C:cytosolic large ribosomal subunit"/>
    <property type="evidence" value="ECO:0007669"/>
    <property type="project" value="TreeGrafter"/>
</dbReference>
<dbReference type="GO" id="GO:0003735">
    <property type="term" value="F:structural constituent of ribosome"/>
    <property type="evidence" value="ECO:0007669"/>
    <property type="project" value="InterPro"/>
</dbReference>
<dbReference type="GO" id="GO:0006412">
    <property type="term" value="P:translation"/>
    <property type="evidence" value="ECO:0007669"/>
    <property type="project" value="UniProtKB-UniRule"/>
</dbReference>
<dbReference type="FunFam" id="3.90.1030.10:FF:000002">
    <property type="entry name" value="50S ribosomal protein L17"/>
    <property type="match status" value="1"/>
</dbReference>
<dbReference type="Gene3D" id="3.90.1030.10">
    <property type="entry name" value="Ribosomal protein L17"/>
    <property type="match status" value="1"/>
</dbReference>
<dbReference type="HAMAP" id="MF_01368">
    <property type="entry name" value="Ribosomal_bL17"/>
    <property type="match status" value="1"/>
</dbReference>
<dbReference type="InterPro" id="IPR000456">
    <property type="entry name" value="Ribosomal_bL17"/>
</dbReference>
<dbReference type="InterPro" id="IPR047859">
    <property type="entry name" value="Ribosomal_bL17_CS"/>
</dbReference>
<dbReference type="InterPro" id="IPR036373">
    <property type="entry name" value="Ribosomal_bL17_sf"/>
</dbReference>
<dbReference type="NCBIfam" id="TIGR00059">
    <property type="entry name" value="L17"/>
    <property type="match status" value="1"/>
</dbReference>
<dbReference type="PANTHER" id="PTHR14413:SF16">
    <property type="entry name" value="LARGE RIBOSOMAL SUBUNIT PROTEIN BL17M"/>
    <property type="match status" value="1"/>
</dbReference>
<dbReference type="PANTHER" id="PTHR14413">
    <property type="entry name" value="RIBOSOMAL PROTEIN L17"/>
    <property type="match status" value="1"/>
</dbReference>
<dbReference type="Pfam" id="PF01196">
    <property type="entry name" value="Ribosomal_L17"/>
    <property type="match status" value="1"/>
</dbReference>
<dbReference type="SUPFAM" id="SSF64263">
    <property type="entry name" value="Prokaryotic ribosomal protein L17"/>
    <property type="match status" value="1"/>
</dbReference>
<dbReference type="PROSITE" id="PS01167">
    <property type="entry name" value="RIBOSOMAL_L17"/>
    <property type="match status" value="1"/>
</dbReference>